<accession>B3ETZ4</accession>
<gene>
    <name evidence="1" type="primary">rplK</name>
    <name type="ordered locus">Aasi_1400</name>
</gene>
<protein>
    <recommendedName>
        <fullName evidence="1">Large ribosomal subunit protein uL11</fullName>
    </recommendedName>
    <alternativeName>
        <fullName evidence="2">50S ribosomal protein L11</fullName>
    </alternativeName>
</protein>
<organism>
    <name type="scientific">Amoebophilus asiaticus (strain 5a2)</name>
    <dbReference type="NCBI Taxonomy" id="452471"/>
    <lineage>
        <taxon>Bacteria</taxon>
        <taxon>Pseudomonadati</taxon>
        <taxon>Bacteroidota</taxon>
        <taxon>Cytophagia</taxon>
        <taxon>Cytophagales</taxon>
        <taxon>Amoebophilaceae</taxon>
        <taxon>Candidatus Amoebophilus</taxon>
    </lineage>
</organism>
<comment type="function">
    <text evidence="1">Forms part of the ribosomal stalk which helps the ribosome interact with GTP-bound translation factors.</text>
</comment>
<comment type="subunit">
    <text evidence="1">Part of the ribosomal stalk of the 50S ribosomal subunit. Interacts with L10 and the large rRNA to form the base of the stalk. L10 forms an elongated spine to which L12 dimers bind in a sequential fashion forming a multimeric L10(L12)X complex.</text>
</comment>
<comment type="PTM">
    <text evidence="1">One or more lysine residues are methylated.</text>
</comment>
<comment type="similarity">
    <text evidence="1">Belongs to the universal ribosomal protein uL11 family.</text>
</comment>
<dbReference type="EMBL" id="CP001102">
    <property type="protein sequence ID" value="ACE06696.1"/>
    <property type="molecule type" value="Genomic_DNA"/>
</dbReference>
<dbReference type="RefSeq" id="WP_012473438.1">
    <property type="nucleotide sequence ID" value="NC_010830.1"/>
</dbReference>
<dbReference type="SMR" id="B3ETZ4"/>
<dbReference type="STRING" id="452471.Aasi_1400"/>
<dbReference type="KEGG" id="aas:Aasi_1400"/>
<dbReference type="eggNOG" id="COG0080">
    <property type="taxonomic scope" value="Bacteria"/>
</dbReference>
<dbReference type="HOGENOM" id="CLU_074237_2_0_10"/>
<dbReference type="OrthoDB" id="9802408at2"/>
<dbReference type="Proteomes" id="UP000001227">
    <property type="component" value="Chromosome"/>
</dbReference>
<dbReference type="GO" id="GO:0022625">
    <property type="term" value="C:cytosolic large ribosomal subunit"/>
    <property type="evidence" value="ECO:0007669"/>
    <property type="project" value="TreeGrafter"/>
</dbReference>
<dbReference type="GO" id="GO:0070180">
    <property type="term" value="F:large ribosomal subunit rRNA binding"/>
    <property type="evidence" value="ECO:0007669"/>
    <property type="project" value="UniProtKB-UniRule"/>
</dbReference>
<dbReference type="GO" id="GO:0003735">
    <property type="term" value="F:structural constituent of ribosome"/>
    <property type="evidence" value="ECO:0007669"/>
    <property type="project" value="InterPro"/>
</dbReference>
<dbReference type="GO" id="GO:0006412">
    <property type="term" value="P:translation"/>
    <property type="evidence" value="ECO:0007669"/>
    <property type="project" value="UniProtKB-UniRule"/>
</dbReference>
<dbReference type="CDD" id="cd00349">
    <property type="entry name" value="Ribosomal_L11"/>
    <property type="match status" value="1"/>
</dbReference>
<dbReference type="FunFam" id="1.10.10.250:FF:000001">
    <property type="entry name" value="50S ribosomal protein L11"/>
    <property type="match status" value="1"/>
</dbReference>
<dbReference type="FunFam" id="3.30.1550.10:FF:000005">
    <property type="entry name" value="50S ribosomal protein L11"/>
    <property type="match status" value="1"/>
</dbReference>
<dbReference type="Gene3D" id="1.10.10.250">
    <property type="entry name" value="Ribosomal protein L11, C-terminal domain"/>
    <property type="match status" value="1"/>
</dbReference>
<dbReference type="Gene3D" id="3.30.1550.10">
    <property type="entry name" value="Ribosomal protein L11/L12, N-terminal domain"/>
    <property type="match status" value="1"/>
</dbReference>
<dbReference type="HAMAP" id="MF_00736">
    <property type="entry name" value="Ribosomal_uL11"/>
    <property type="match status" value="1"/>
</dbReference>
<dbReference type="InterPro" id="IPR000911">
    <property type="entry name" value="Ribosomal_uL11"/>
</dbReference>
<dbReference type="InterPro" id="IPR006519">
    <property type="entry name" value="Ribosomal_uL11_bac-typ"/>
</dbReference>
<dbReference type="InterPro" id="IPR020783">
    <property type="entry name" value="Ribosomal_uL11_C"/>
</dbReference>
<dbReference type="InterPro" id="IPR036769">
    <property type="entry name" value="Ribosomal_uL11_C_sf"/>
</dbReference>
<dbReference type="InterPro" id="IPR020785">
    <property type="entry name" value="Ribosomal_uL11_CS"/>
</dbReference>
<dbReference type="InterPro" id="IPR020784">
    <property type="entry name" value="Ribosomal_uL11_N"/>
</dbReference>
<dbReference type="InterPro" id="IPR036796">
    <property type="entry name" value="Ribosomal_uL11_N_sf"/>
</dbReference>
<dbReference type="NCBIfam" id="TIGR01632">
    <property type="entry name" value="L11_bact"/>
    <property type="match status" value="1"/>
</dbReference>
<dbReference type="PANTHER" id="PTHR11661">
    <property type="entry name" value="60S RIBOSOMAL PROTEIN L12"/>
    <property type="match status" value="1"/>
</dbReference>
<dbReference type="PANTHER" id="PTHR11661:SF1">
    <property type="entry name" value="LARGE RIBOSOMAL SUBUNIT PROTEIN UL11M"/>
    <property type="match status" value="1"/>
</dbReference>
<dbReference type="Pfam" id="PF00298">
    <property type="entry name" value="Ribosomal_L11"/>
    <property type="match status" value="1"/>
</dbReference>
<dbReference type="Pfam" id="PF03946">
    <property type="entry name" value="Ribosomal_L11_N"/>
    <property type="match status" value="1"/>
</dbReference>
<dbReference type="SMART" id="SM00649">
    <property type="entry name" value="RL11"/>
    <property type="match status" value="1"/>
</dbReference>
<dbReference type="SUPFAM" id="SSF54747">
    <property type="entry name" value="Ribosomal L11/L12e N-terminal domain"/>
    <property type="match status" value="1"/>
</dbReference>
<dbReference type="SUPFAM" id="SSF46906">
    <property type="entry name" value="Ribosomal protein L11, C-terminal domain"/>
    <property type="match status" value="1"/>
</dbReference>
<dbReference type="PROSITE" id="PS00359">
    <property type="entry name" value="RIBOSOMAL_L11"/>
    <property type="match status" value="1"/>
</dbReference>
<sequence>MAKEIVGYLKLQVKGGEAKPAPPVGPALGSKGLNIMEFCKQFNARTQDKQGQILPVLITIYQDKTFDFVIKTPPAAASIMQKAGISKGSSESNRNKVGVITWSAIKEIAASKMEDLNTINLESATKMIAGTARSMGVTIKE</sequence>
<feature type="chain" id="PRO_1000132858" description="Large ribosomal subunit protein uL11">
    <location>
        <begin position="1"/>
        <end position="141"/>
    </location>
</feature>
<name>RL11_AMOA5</name>
<reference key="1">
    <citation type="journal article" date="2010" name="J. Bacteriol.">
        <title>The genome of the amoeba symbiont 'Candidatus Amoebophilus asiaticus' reveals common mechanisms for host cell interaction among amoeba-associated bacteria.</title>
        <authorList>
            <person name="Schmitz-Esser S."/>
            <person name="Tischler P."/>
            <person name="Arnold R."/>
            <person name="Montanaro J."/>
            <person name="Wagner M."/>
            <person name="Rattei T."/>
            <person name="Horn M."/>
        </authorList>
    </citation>
    <scope>NUCLEOTIDE SEQUENCE [LARGE SCALE GENOMIC DNA]</scope>
    <source>
        <strain>5a2</strain>
    </source>
</reference>
<keyword id="KW-0488">Methylation</keyword>
<keyword id="KW-1185">Reference proteome</keyword>
<keyword id="KW-0687">Ribonucleoprotein</keyword>
<keyword id="KW-0689">Ribosomal protein</keyword>
<keyword id="KW-0694">RNA-binding</keyword>
<keyword id="KW-0699">rRNA-binding</keyword>
<proteinExistence type="inferred from homology"/>
<evidence type="ECO:0000255" key="1">
    <source>
        <dbReference type="HAMAP-Rule" id="MF_00736"/>
    </source>
</evidence>
<evidence type="ECO:0000305" key="2"/>